<comment type="function">
    <text evidence="1">Catalyzes the folate-dependent formation of 5-methyl-uridine at position 54 (M-5-U54) in all tRNAs.</text>
</comment>
<comment type="catalytic activity">
    <reaction evidence="1">
        <text>uridine(54) in tRNA + (6R)-5,10-methylene-5,6,7,8-tetrahydrofolate + NADH + H(+) = 5-methyluridine(54) in tRNA + (6S)-5,6,7,8-tetrahydrofolate + NAD(+)</text>
        <dbReference type="Rhea" id="RHEA:16873"/>
        <dbReference type="Rhea" id="RHEA-COMP:10167"/>
        <dbReference type="Rhea" id="RHEA-COMP:10193"/>
        <dbReference type="ChEBI" id="CHEBI:15378"/>
        <dbReference type="ChEBI" id="CHEBI:15636"/>
        <dbReference type="ChEBI" id="CHEBI:57453"/>
        <dbReference type="ChEBI" id="CHEBI:57540"/>
        <dbReference type="ChEBI" id="CHEBI:57945"/>
        <dbReference type="ChEBI" id="CHEBI:65315"/>
        <dbReference type="ChEBI" id="CHEBI:74447"/>
        <dbReference type="EC" id="2.1.1.74"/>
    </reaction>
</comment>
<comment type="catalytic activity">
    <reaction evidence="1">
        <text>uridine(54) in tRNA + (6R)-5,10-methylene-5,6,7,8-tetrahydrofolate + NADPH + H(+) = 5-methyluridine(54) in tRNA + (6S)-5,6,7,8-tetrahydrofolate + NADP(+)</text>
        <dbReference type="Rhea" id="RHEA:62372"/>
        <dbReference type="Rhea" id="RHEA-COMP:10167"/>
        <dbReference type="Rhea" id="RHEA-COMP:10193"/>
        <dbReference type="ChEBI" id="CHEBI:15378"/>
        <dbReference type="ChEBI" id="CHEBI:15636"/>
        <dbReference type="ChEBI" id="CHEBI:57453"/>
        <dbReference type="ChEBI" id="CHEBI:57783"/>
        <dbReference type="ChEBI" id="CHEBI:58349"/>
        <dbReference type="ChEBI" id="CHEBI:65315"/>
        <dbReference type="ChEBI" id="CHEBI:74447"/>
        <dbReference type="EC" id="2.1.1.74"/>
    </reaction>
</comment>
<comment type="cofactor">
    <cofactor evidence="1">
        <name>FAD</name>
        <dbReference type="ChEBI" id="CHEBI:57692"/>
    </cofactor>
</comment>
<comment type="subcellular location">
    <subcellularLocation>
        <location evidence="1">Cytoplasm</location>
    </subcellularLocation>
</comment>
<comment type="similarity">
    <text evidence="1">Belongs to the MnmG family. TrmFO subfamily.</text>
</comment>
<sequence length="434" mass="48068">MTTQVVNVIGAGLAGSEAAYQIAKRGVQVRLYEMRPVRQTPAHHTDKFAELVCSNSLRANTLTNAVGVIKEEMRLMDSVIIRAADECSVPAGGALAVDRHEFAAKVTEYVKNHPNVTVMNEEITEIPEGPTIIATGPLTSPDLSAQLKELTGEDYFYFYDAAAPIVEKDSIDMNKVYLKSRYDKGEAAYLNCPMTEEEFDRFYEALIAAETVPLKEFEKEIFFEGCMPVEVMASRGRQTLVFGPMKPVGLEDPKTGKTPYAVVQLRQDDAAGTLYNIVGFQTHLKWGPQKEVLQLIPGLENAEIVRYGVMHRNTFINSPNLLRPTYQYKQRDDLFFAGQMTGVEGYVESAASGLLAGINAARLVKGEEPVVLPPVTAMGSMANYITATNAKNFQPMNANFGLFAPLEKKIKKKAERNEAYATRALEMIRNFVNI</sequence>
<proteinExistence type="inferred from homology"/>
<organism>
    <name type="scientific">Bacillus anthracis (strain A0248)</name>
    <dbReference type="NCBI Taxonomy" id="592021"/>
    <lineage>
        <taxon>Bacteria</taxon>
        <taxon>Bacillati</taxon>
        <taxon>Bacillota</taxon>
        <taxon>Bacilli</taxon>
        <taxon>Bacillales</taxon>
        <taxon>Bacillaceae</taxon>
        <taxon>Bacillus</taxon>
        <taxon>Bacillus cereus group</taxon>
    </lineage>
</organism>
<name>TRMFO_BACAA</name>
<protein>
    <recommendedName>
        <fullName evidence="1">Methylenetetrahydrofolate--tRNA-(uracil-5-)-methyltransferase TrmFO</fullName>
        <ecNumber evidence="1">2.1.1.74</ecNumber>
    </recommendedName>
    <alternativeName>
        <fullName evidence="1">Folate-dependent tRNA (uracil-5-)-methyltransferase</fullName>
    </alternativeName>
    <alternativeName>
        <fullName evidence="1">Folate-dependent tRNA(M-5-U54)-methyltransferase</fullName>
    </alternativeName>
</protein>
<evidence type="ECO:0000255" key="1">
    <source>
        <dbReference type="HAMAP-Rule" id="MF_01037"/>
    </source>
</evidence>
<accession>C3P5N4</accession>
<dbReference type="EC" id="2.1.1.74" evidence="1"/>
<dbReference type="EMBL" id="CP001598">
    <property type="protein sequence ID" value="ACQ48726.1"/>
    <property type="molecule type" value="Genomic_DNA"/>
</dbReference>
<dbReference type="RefSeq" id="WP_003161605.1">
    <property type="nucleotide sequence ID" value="NC_012659.1"/>
</dbReference>
<dbReference type="SMR" id="C3P5N4"/>
<dbReference type="GeneID" id="45023660"/>
<dbReference type="KEGG" id="bai:BAA_3993"/>
<dbReference type="HOGENOM" id="CLU_033057_1_0_9"/>
<dbReference type="GO" id="GO:0005829">
    <property type="term" value="C:cytosol"/>
    <property type="evidence" value="ECO:0007669"/>
    <property type="project" value="TreeGrafter"/>
</dbReference>
<dbReference type="GO" id="GO:0050660">
    <property type="term" value="F:flavin adenine dinucleotide binding"/>
    <property type="evidence" value="ECO:0007669"/>
    <property type="project" value="UniProtKB-UniRule"/>
</dbReference>
<dbReference type="GO" id="GO:0047151">
    <property type="term" value="F:tRNA (uracil(54)-C5)-methyltransferase activity, 5,10-methylenetetrahydrofolate-dependent"/>
    <property type="evidence" value="ECO:0007669"/>
    <property type="project" value="UniProtKB-UniRule"/>
</dbReference>
<dbReference type="GO" id="GO:0030488">
    <property type="term" value="P:tRNA methylation"/>
    <property type="evidence" value="ECO:0007669"/>
    <property type="project" value="TreeGrafter"/>
</dbReference>
<dbReference type="GO" id="GO:0002098">
    <property type="term" value="P:tRNA wobble uridine modification"/>
    <property type="evidence" value="ECO:0007669"/>
    <property type="project" value="TreeGrafter"/>
</dbReference>
<dbReference type="FunFam" id="3.50.50.60:FF:000035">
    <property type="entry name" value="Methylenetetrahydrofolate--tRNA-(uracil-5-)-methyltransferase TrmFO"/>
    <property type="match status" value="1"/>
</dbReference>
<dbReference type="FunFam" id="3.50.50.60:FF:000040">
    <property type="entry name" value="Methylenetetrahydrofolate--tRNA-(uracil-5-)-methyltransferase TrmFO"/>
    <property type="match status" value="1"/>
</dbReference>
<dbReference type="Gene3D" id="3.50.50.60">
    <property type="entry name" value="FAD/NAD(P)-binding domain"/>
    <property type="match status" value="2"/>
</dbReference>
<dbReference type="HAMAP" id="MF_01037">
    <property type="entry name" value="TrmFO"/>
    <property type="match status" value="1"/>
</dbReference>
<dbReference type="InterPro" id="IPR036188">
    <property type="entry name" value="FAD/NAD-bd_sf"/>
</dbReference>
<dbReference type="InterPro" id="IPR002218">
    <property type="entry name" value="MnmG-rel"/>
</dbReference>
<dbReference type="InterPro" id="IPR020595">
    <property type="entry name" value="MnmG-rel_CS"/>
</dbReference>
<dbReference type="InterPro" id="IPR040131">
    <property type="entry name" value="MnmG_N"/>
</dbReference>
<dbReference type="InterPro" id="IPR004417">
    <property type="entry name" value="TrmFO"/>
</dbReference>
<dbReference type="NCBIfam" id="TIGR00137">
    <property type="entry name" value="gid_trmFO"/>
    <property type="match status" value="1"/>
</dbReference>
<dbReference type="NCBIfam" id="NF003739">
    <property type="entry name" value="PRK05335.1"/>
    <property type="match status" value="1"/>
</dbReference>
<dbReference type="PANTHER" id="PTHR11806">
    <property type="entry name" value="GLUCOSE INHIBITED DIVISION PROTEIN A"/>
    <property type="match status" value="1"/>
</dbReference>
<dbReference type="PANTHER" id="PTHR11806:SF2">
    <property type="entry name" value="METHYLENETETRAHYDROFOLATE--TRNA-(URACIL-5-)-METHYLTRANSFERASE TRMFO"/>
    <property type="match status" value="1"/>
</dbReference>
<dbReference type="Pfam" id="PF01134">
    <property type="entry name" value="GIDA"/>
    <property type="match status" value="1"/>
</dbReference>
<dbReference type="SUPFAM" id="SSF51905">
    <property type="entry name" value="FAD/NAD(P)-binding domain"/>
    <property type="match status" value="1"/>
</dbReference>
<dbReference type="PROSITE" id="PS01281">
    <property type="entry name" value="GIDA_2"/>
    <property type="match status" value="1"/>
</dbReference>
<feature type="chain" id="PRO_1000149464" description="Methylenetetrahydrofolate--tRNA-(uracil-5-)-methyltransferase TrmFO">
    <location>
        <begin position="1"/>
        <end position="434"/>
    </location>
</feature>
<feature type="binding site" evidence="1">
    <location>
        <begin position="10"/>
        <end position="15"/>
    </location>
    <ligand>
        <name>FAD</name>
        <dbReference type="ChEBI" id="CHEBI:57692"/>
    </ligand>
</feature>
<keyword id="KW-0963">Cytoplasm</keyword>
<keyword id="KW-0274">FAD</keyword>
<keyword id="KW-0285">Flavoprotein</keyword>
<keyword id="KW-0489">Methyltransferase</keyword>
<keyword id="KW-0520">NAD</keyword>
<keyword id="KW-0521">NADP</keyword>
<keyword id="KW-0808">Transferase</keyword>
<keyword id="KW-0819">tRNA processing</keyword>
<gene>
    <name evidence="1" type="primary">trmFO</name>
    <name type="ordered locus">BAA_3993</name>
</gene>
<reference key="1">
    <citation type="submission" date="2009-04" db="EMBL/GenBank/DDBJ databases">
        <title>Genome sequence of Bacillus anthracis A0248.</title>
        <authorList>
            <person name="Dodson R.J."/>
            <person name="Munk A.C."/>
            <person name="Bruce D."/>
            <person name="Detter C."/>
            <person name="Tapia R."/>
            <person name="Sutton G."/>
            <person name="Sims D."/>
            <person name="Brettin T."/>
        </authorList>
    </citation>
    <scope>NUCLEOTIDE SEQUENCE [LARGE SCALE GENOMIC DNA]</scope>
    <source>
        <strain>A0248</strain>
    </source>
</reference>